<dbReference type="EMBL" id="AY261363">
    <property type="status" value="NOT_ANNOTATED_CDS"/>
    <property type="molecule type" value="Genomic_DNA"/>
</dbReference>
<dbReference type="Proteomes" id="UP000000859">
    <property type="component" value="Segment"/>
</dbReference>
<dbReference type="GO" id="GO:0033644">
    <property type="term" value="C:host cell membrane"/>
    <property type="evidence" value="ECO:0007669"/>
    <property type="project" value="UniProtKB-SubCell"/>
</dbReference>
<dbReference type="GO" id="GO:0016020">
    <property type="term" value="C:membrane"/>
    <property type="evidence" value="ECO:0007669"/>
    <property type="project" value="UniProtKB-KW"/>
</dbReference>
<evidence type="ECO:0000255" key="1"/>
<evidence type="ECO:0000305" key="2"/>
<reference key="1">
    <citation type="submission" date="2003-03" db="EMBL/GenBank/DDBJ databases">
        <title>African swine fever virus genomes.</title>
        <authorList>
            <person name="Kutish G.F."/>
            <person name="Rock D.L."/>
        </authorList>
    </citation>
    <scope>NUCLEOTIDE SEQUENCE [LARGE SCALE GENOMIC DNA]</scope>
</reference>
<accession>P0CA68</accession>
<organismHost>
    <name type="scientific">Ornithodoros</name>
    <name type="common">relapsing fever ticks</name>
    <dbReference type="NCBI Taxonomy" id="6937"/>
</organismHost>
<organismHost>
    <name type="scientific">Phacochoerus aethiopicus</name>
    <name type="common">Warthog</name>
    <dbReference type="NCBI Taxonomy" id="85517"/>
</organismHost>
<organismHost>
    <name type="scientific">Phacochoerus africanus</name>
    <name type="common">Warthog</name>
    <dbReference type="NCBI Taxonomy" id="41426"/>
</organismHost>
<organismHost>
    <name type="scientific">Potamochoerus larvatus</name>
    <name type="common">Bushpig</name>
    <dbReference type="NCBI Taxonomy" id="273792"/>
</organismHost>
<organismHost>
    <name type="scientific">Sus scrofa</name>
    <name type="common">Pig</name>
    <dbReference type="NCBI Taxonomy" id="9823"/>
</organismHost>
<protein>
    <recommendedName>
        <fullName>Uncharacterized protein F165R</fullName>
        <shortName>pF165R</shortName>
    </recommendedName>
</protein>
<proteinExistence type="inferred from homology"/>
<keyword id="KW-1043">Host membrane</keyword>
<keyword id="KW-0472">Membrane</keyword>
<keyword id="KW-0812">Transmembrane</keyword>
<keyword id="KW-1133">Transmembrane helix</keyword>
<feature type="chain" id="PRO_0000373546" description="Uncharacterized protein F165R">
    <location>
        <begin position="1"/>
        <end position="165"/>
    </location>
</feature>
<feature type="transmembrane region" description="Helical" evidence="1">
    <location>
        <begin position="16"/>
        <end position="36"/>
    </location>
</feature>
<gene>
    <name type="ordered locus">Pret-058</name>
</gene>
<name>VF165_ASFP4</name>
<sequence>MANPNKRIMNKKSKQASISSILNFFFFYIMEYFVAVDNETSLGVFTSIEQCEETMKQYPGLHYVVFKYTCPADAENTDVVYLIPSLTLHTPMFVDHCPNRTKQARHVLKKINLVFEEESIENWKVSVNTVFPHVHNRLSAPKLSIDEANEAVEKFLIQAGRLMSL</sequence>
<comment type="subcellular location">
    <subcellularLocation>
        <location evidence="2">Host membrane</location>
        <topology evidence="2">Single-pass membrane protein</topology>
    </subcellularLocation>
</comment>
<comment type="similarity">
    <text evidence="2">Belongs to the asfivirus F165R family.</text>
</comment>
<organism>
    <name type="scientific">African swine fever virus (isolate Tick/South Africa/Pretoriuskop Pr4/1996)</name>
    <name type="common">ASFV</name>
    <dbReference type="NCBI Taxonomy" id="561443"/>
    <lineage>
        <taxon>Viruses</taxon>
        <taxon>Varidnaviria</taxon>
        <taxon>Bamfordvirae</taxon>
        <taxon>Nucleocytoviricota</taxon>
        <taxon>Pokkesviricetes</taxon>
        <taxon>Asfuvirales</taxon>
        <taxon>Asfarviridae</taxon>
        <taxon>Asfivirus</taxon>
        <taxon>African swine fever virus</taxon>
    </lineage>
</organism>